<reference key="1">
    <citation type="journal article" date="2002" name="Nature">
        <title>The genome sequence and structure of rice chromosome 1.</title>
        <authorList>
            <person name="Sasaki T."/>
            <person name="Matsumoto T."/>
            <person name="Yamamoto K."/>
            <person name="Sakata K."/>
            <person name="Baba T."/>
            <person name="Katayose Y."/>
            <person name="Wu J."/>
            <person name="Niimura Y."/>
            <person name="Cheng Z."/>
            <person name="Nagamura Y."/>
            <person name="Antonio B.A."/>
            <person name="Kanamori H."/>
            <person name="Hosokawa S."/>
            <person name="Masukawa M."/>
            <person name="Arikawa K."/>
            <person name="Chiden Y."/>
            <person name="Hayashi M."/>
            <person name="Okamoto M."/>
            <person name="Ando T."/>
            <person name="Aoki H."/>
            <person name="Arita K."/>
            <person name="Hamada M."/>
            <person name="Harada C."/>
            <person name="Hijishita S."/>
            <person name="Honda M."/>
            <person name="Ichikawa Y."/>
            <person name="Idonuma A."/>
            <person name="Iijima M."/>
            <person name="Ikeda M."/>
            <person name="Ikeno M."/>
            <person name="Ito S."/>
            <person name="Ito T."/>
            <person name="Ito Y."/>
            <person name="Ito Y."/>
            <person name="Iwabuchi A."/>
            <person name="Kamiya K."/>
            <person name="Karasawa W."/>
            <person name="Katagiri S."/>
            <person name="Kikuta A."/>
            <person name="Kobayashi N."/>
            <person name="Kono I."/>
            <person name="Machita K."/>
            <person name="Maehara T."/>
            <person name="Mizuno H."/>
            <person name="Mizubayashi T."/>
            <person name="Mukai Y."/>
            <person name="Nagasaki H."/>
            <person name="Nakashima M."/>
            <person name="Nakama Y."/>
            <person name="Nakamichi Y."/>
            <person name="Nakamura M."/>
            <person name="Namiki N."/>
            <person name="Negishi M."/>
            <person name="Ohta I."/>
            <person name="Ono N."/>
            <person name="Saji S."/>
            <person name="Sakai K."/>
            <person name="Shibata M."/>
            <person name="Shimokawa T."/>
            <person name="Shomura A."/>
            <person name="Song J."/>
            <person name="Takazaki Y."/>
            <person name="Terasawa K."/>
            <person name="Tsuji K."/>
            <person name="Waki K."/>
            <person name="Yamagata H."/>
            <person name="Yamane H."/>
            <person name="Yoshiki S."/>
            <person name="Yoshihara R."/>
            <person name="Yukawa K."/>
            <person name="Zhong H."/>
            <person name="Iwama H."/>
            <person name="Endo T."/>
            <person name="Ito H."/>
            <person name="Hahn J.H."/>
            <person name="Kim H.-I."/>
            <person name="Eun M.-Y."/>
            <person name="Yano M."/>
            <person name="Jiang J."/>
            <person name="Gojobori T."/>
        </authorList>
    </citation>
    <scope>NUCLEOTIDE SEQUENCE [LARGE SCALE GENOMIC DNA]</scope>
    <source>
        <strain>cv. Nipponbare</strain>
    </source>
</reference>
<reference key="2">
    <citation type="journal article" date="2005" name="Nature">
        <title>The map-based sequence of the rice genome.</title>
        <authorList>
            <consortium name="International rice genome sequencing project (IRGSP)"/>
        </authorList>
    </citation>
    <scope>NUCLEOTIDE SEQUENCE [LARGE SCALE GENOMIC DNA]</scope>
    <source>
        <strain>cv. Nipponbare</strain>
    </source>
</reference>
<reference key="3">
    <citation type="journal article" date="2008" name="Nucleic Acids Res.">
        <title>The rice annotation project database (RAP-DB): 2008 update.</title>
        <authorList>
            <consortium name="The rice annotation project (RAP)"/>
        </authorList>
    </citation>
    <scope>GENOME REANNOTATION</scope>
    <source>
        <strain>cv. Nipponbare</strain>
    </source>
</reference>
<reference key="4">
    <citation type="journal article" date="2013" name="Rice">
        <title>Improvement of the Oryza sativa Nipponbare reference genome using next generation sequence and optical map data.</title>
        <authorList>
            <person name="Kawahara Y."/>
            <person name="de la Bastide M."/>
            <person name="Hamilton J.P."/>
            <person name="Kanamori H."/>
            <person name="McCombie W.R."/>
            <person name="Ouyang S."/>
            <person name="Schwartz D.C."/>
            <person name="Tanaka T."/>
            <person name="Wu J."/>
            <person name="Zhou S."/>
            <person name="Childs K.L."/>
            <person name="Davidson R.M."/>
            <person name="Lin H."/>
            <person name="Quesada-Ocampo L."/>
            <person name="Vaillancourt B."/>
            <person name="Sakai H."/>
            <person name="Lee S.S."/>
            <person name="Kim J."/>
            <person name="Numa H."/>
            <person name="Itoh T."/>
            <person name="Buell C.R."/>
            <person name="Matsumoto T."/>
        </authorList>
    </citation>
    <scope>GENOME REANNOTATION</scope>
    <source>
        <strain>cv. Nipponbare</strain>
    </source>
</reference>
<reference key="5">
    <citation type="journal article" date="2003" name="Science">
        <title>Collection, mapping, and annotation of over 28,000 cDNA clones from japonica rice.</title>
        <authorList>
            <consortium name="The rice full-length cDNA consortium"/>
        </authorList>
    </citation>
    <scope>NUCLEOTIDE SEQUENCE [LARGE SCALE MRNA]</scope>
    <source>
        <strain>cv. Nipponbare</strain>
    </source>
</reference>
<reference key="6">
    <citation type="journal article" date="2006" name="J. Exp. Bot.">
        <title>Genome-wide analysis of plant glutaredoxin systems.</title>
        <authorList>
            <person name="Rouhier N."/>
            <person name="Couturier J."/>
            <person name="Jacquot J.-P."/>
        </authorList>
    </citation>
    <scope>GENE FAMILY</scope>
</reference>
<gene>
    <name type="primary">GRXS5</name>
    <name type="ordered locus">Os01g0667900</name>
    <name type="ordered locus">LOC_Os01g47760</name>
    <name type="ORF">OSJNBb0063G05.32</name>
    <name type="ORF">P0014E08.2</name>
</gene>
<keyword id="KW-0001">2Fe-2S</keyword>
<keyword id="KW-0963">Cytoplasm</keyword>
<keyword id="KW-0408">Iron</keyword>
<keyword id="KW-0411">Iron-sulfur</keyword>
<keyword id="KW-0479">Metal-binding</keyword>
<keyword id="KW-0539">Nucleus</keyword>
<keyword id="KW-0676">Redox-active center</keyword>
<keyword id="KW-1185">Reference proteome</keyword>
<evidence type="ECO:0000250" key="1"/>
<evidence type="ECO:0000255" key="2"/>
<evidence type="ECO:0000255" key="3">
    <source>
        <dbReference type="PROSITE-ProRule" id="PRU00686"/>
    </source>
</evidence>
<evidence type="ECO:0000305" key="4"/>
<dbReference type="EMBL" id="AP003760">
    <property type="protein sequence ID" value="BAD73655.1"/>
    <property type="molecule type" value="Genomic_DNA"/>
</dbReference>
<dbReference type="EMBL" id="AP004194">
    <property type="protein sequence ID" value="BAD73683.1"/>
    <property type="molecule type" value="Genomic_DNA"/>
</dbReference>
<dbReference type="EMBL" id="AP008207">
    <property type="protein sequence ID" value="BAF05726.1"/>
    <property type="molecule type" value="Genomic_DNA"/>
</dbReference>
<dbReference type="EMBL" id="AP014957">
    <property type="protein sequence ID" value="BAS73597.1"/>
    <property type="molecule type" value="Genomic_DNA"/>
</dbReference>
<dbReference type="EMBL" id="AK105335">
    <property type="protein sequence ID" value="BAG97196.1"/>
    <property type="molecule type" value="mRNA"/>
</dbReference>
<dbReference type="RefSeq" id="XP_015624046.1">
    <property type="nucleotide sequence ID" value="XM_015768560.1"/>
</dbReference>
<dbReference type="SMR" id="Q5QLR2"/>
<dbReference type="FunCoup" id="Q5QLR2">
    <property type="interactions" value="19"/>
</dbReference>
<dbReference type="STRING" id="39947.Q5QLR2"/>
<dbReference type="PaxDb" id="39947-Q5QLR2"/>
<dbReference type="EnsemblPlants" id="Os01t0667900-01">
    <property type="protein sequence ID" value="Os01t0667900-01"/>
    <property type="gene ID" value="Os01g0667900"/>
</dbReference>
<dbReference type="Gramene" id="Os01t0667900-01">
    <property type="protein sequence ID" value="Os01t0667900-01"/>
    <property type="gene ID" value="Os01g0667900"/>
</dbReference>
<dbReference type="KEGG" id="dosa:Os01g0667900"/>
<dbReference type="eggNOG" id="KOG1752">
    <property type="taxonomic scope" value="Eukaryota"/>
</dbReference>
<dbReference type="HOGENOM" id="CLU_026126_6_2_1"/>
<dbReference type="InParanoid" id="Q5QLR2"/>
<dbReference type="OMA" id="MVWENAV"/>
<dbReference type="OrthoDB" id="418495at2759"/>
<dbReference type="Proteomes" id="UP000000763">
    <property type="component" value="Chromosome 1"/>
</dbReference>
<dbReference type="Proteomes" id="UP000059680">
    <property type="component" value="Chromosome 1"/>
</dbReference>
<dbReference type="GO" id="GO:0005737">
    <property type="term" value="C:cytoplasm"/>
    <property type="evidence" value="ECO:0007669"/>
    <property type="project" value="UniProtKB-SubCell"/>
</dbReference>
<dbReference type="GO" id="GO:0005634">
    <property type="term" value="C:nucleus"/>
    <property type="evidence" value="ECO:0007669"/>
    <property type="project" value="UniProtKB-SubCell"/>
</dbReference>
<dbReference type="GO" id="GO:0051537">
    <property type="term" value="F:2 iron, 2 sulfur cluster binding"/>
    <property type="evidence" value="ECO:0007669"/>
    <property type="project" value="UniProtKB-KW"/>
</dbReference>
<dbReference type="GO" id="GO:0046872">
    <property type="term" value="F:metal ion binding"/>
    <property type="evidence" value="ECO:0007669"/>
    <property type="project" value="UniProtKB-KW"/>
</dbReference>
<dbReference type="Gene3D" id="3.40.30.10">
    <property type="entry name" value="Glutaredoxin"/>
    <property type="match status" value="1"/>
</dbReference>
<dbReference type="InterPro" id="IPR011905">
    <property type="entry name" value="GlrX-like_pln_2"/>
</dbReference>
<dbReference type="InterPro" id="IPR036249">
    <property type="entry name" value="Thioredoxin-like_sf"/>
</dbReference>
<dbReference type="NCBIfam" id="TIGR02189">
    <property type="entry name" value="GlrX-like_plant"/>
    <property type="match status" value="1"/>
</dbReference>
<dbReference type="PANTHER" id="PTHR10168">
    <property type="entry name" value="GLUTAREDOXIN"/>
    <property type="match status" value="1"/>
</dbReference>
<dbReference type="SUPFAM" id="SSF52833">
    <property type="entry name" value="Thioredoxin-like"/>
    <property type="match status" value="1"/>
</dbReference>
<dbReference type="PROSITE" id="PS51354">
    <property type="entry name" value="GLUTAREDOXIN_2"/>
    <property type="match status" value="1"/>
</dbReference>
<proteinExistence type="evidence at transcript level"/>
<sequence length="147" mass="15145">MYQAIPYSSTRPWLRPEPAASVVDVVKVETTTAVAGRGGEAEVVGEEEAAEVRRAVAESPVLVVGRRGCCLIHVVKRLLQGLGVNPAVHEVAGEAALKGVVPAGGEAAALPAVFVGGKLLGGLDRLMAVHISGELVPILKKAGALWL</sequence>
<protein>
    <recommendedName>
        <fullName>Monothiol glutaredoxin-S5</fullName>
    </recommendedName>
</protein>
<name>GRXS5_ORYSJ</name>
<feature type="chain" id="PRO_0000271274" description="Monothiol glutaredoxin-S5">
    <location>
        <begin position="1"/>
        <end position="147"/>
    </location>
</feature>
<feature type="domain" description="Glutaredoxin" evidence="3">
    <location>
        <begin position="49"/>
        <end position="146"/>
    </location>
</feature>
<feature type="short sequence motif" description="Responsive for interaction with TGA factors" evidence="1">
    <location>
        <begin position="144"/>
        <end position="147"/>
    </location>
</feature>
<feature type="binding site" evidence="2">
    <location>
        <position position="69"/>
    </location>
    <ligand>
        <name>[2Fe-2S] cluster</name>
        <dbReference type="ChEBI" id="CHEBI:190135"/>
        <note>ligand shared between dimeric partners</note>
    </ligand>
</feature>
<accession>Q5QLR2</accession>
<accession>B7EXU9</accession>
<comment type="function">
    <text evidence="4">May only reduce GSH-thiol disulfides, but not protein disulfides.</text>
</comment>
<comment type="subcellular location">
    <subcellularLocation>
        <location evidence="1">Cytoplasm</location>
    </subcellularLocation>
    <subcellularLocation>
        <location evidence="1">Nucleus</location>
    </subcellularLocation>
</comment>
<comment type="similarity">
    <text evidence="4">Belongs to the glutaredoxin family. CC-type subfamily.</text>
</comment>
<organism>
    <name type="scientific">Oryza sativa subsp. japonica</name>
    <name type="common">Rice</name>
    <dbReference type="NCBI Taxonomy" id="39947"/>
    <lineage>
        <taxon>Eukaryota</taxon>
        <taxon>Viridiplantae</taxon>
        <taxon>Streptophyta</taxon>
        <taxon>Embryophyta</taxon>
        <taxon>Tracheophyta</taxon>
        <taxon>Spermatophyta</taxon>
        <taxon>Magnoliopsida</taxon>
        <taxon>Liliopsida</taxon>
        <taxon>Poales</taxon>
        <taxon>Poaceae</taxon>
        <taxon>BOP clade</taxon>
        <taxon>Oryzoideae</taxon>
        <taxon>Oryzeae</taxon>
        <taxon>Oryzinae</taxon>
        <taxon>Oryza</taxon>
        <taxon>Oryza sativa</taxon>
    </lineage>
</organism>